<name>SFTA3_HUMAN</name>
<keyword id="KW-0963">Cytoplasm</keyword>
<keyword id="KW-1185">Reference proteome</keyword>
<keyword id="KW-0964">Secreted</keyword>
<dbReference type="EMBL" id="AL132857">
    <property type="status" value="NOT_ANNOTATED_CDS"/>
    <property type="molecule type" value="Genomic_DNA"/>
</dbReference>
<dbReference type="EMBL" id="BC042093">
    <property type="status" value="NOT_ANNOTATED_CDS"/>
    <property type="molecule type" value="mRNA"/>
</dbReference>
<dbReference type="RefSeq" id="NP_001094811.1">
    <property type="nucleotide sequence ID" value="NM_001101341.1"/>
</dbReference>
<dbReference type="STRING" id="9606.ENSP00000428331"/>
<dbReference type="BioMuta" id="SFTA3"/>
<dbReference type="PaxDb" id="9606-ENSP00000428331"/>
<dbReference type="PeptideAtlas" id="P0C7M3"/>
<dbReference type="UCSC" id="uc001wtr.4">
    <property type="organism name" value="human"/>
</dbReference>
<dbReference type="AGR" id="HGNC:18387"/>
<dbReference type="GeneCards" id="SFTA3"/>
<dbReference type="HGNC" id="HGNC:18387">
    <property type="gene designation" value="SFTA3"/>
</dbReference>
<dbReference type="MalaCards" id="SFTA3"/>
<dbReference type="MIM" id="617860">
    <property type="type" value="gene"/>
</dbReference>
<dbReference type="neXtProt" id="NX_P0C7M3"/>
<dbReference type="PharmGKB" id="PA164725680"/>
<dbReference type="eggNOG" id="ENOG502TEQ8">
    <property type="taxonomic scope" value="Eukaryota"/>
</dbReference>
<dbReference type="HOGENOM" id="CLU_2399139_0_0_1"/>
<dbReference type="InParanoid" id="P0C7M3"/>
<dbReference type="PAN-GO" id="P0C7M3">
    <property type="GO annotations" value="1 GO annotation based on evolutionary models"/>
</dbReference>
<dbReference type="PathwayCommons" id="P0C7M3"/>
<dbReference type="Reactome" id="R-HSA-5683826">
    <property type="pathway name" value="Surfactant metabolism"/>
</dbReference>
<dbReference type="Reactome" id="R-HSA-5688849">
    <property type="pathway name" value="Defective CSF2RB causes SMDP5"/>
</dbReference>
<dbReference type="Reactome" id="R-HSA-5688890">
    <property type="pathway name" value="Defective CSF2RA causes SMDP4"/>
</dbReference>
<dbReference type="SignaLink" id="P0C7M3"/>
<dbReference type="BioGRID-ORCS" id="253970">
    <property type="hits" value="10 hits in 1135 CRISPR screens"/>
</dbReference>
<dbReference type="ChiTaRS" id="SFTA3">
    <property type="organism name" value="human"/>
</dbReference>
<dbReference type="GenomeRNAi" id="253970"/>
<dbReference type="Pharos" id="P0C7M3">
    <property type="development level" value="Tbio"/>
</dbReference>
<dbReference type="PRO" id="PR:P0C7M3"/>
<dbReference type="Proteomes" id="UP000005640">
    <property type="component" value="Chromosome 14"/>
</dbReference>
<dbReference type="RNAct" id="P0C7M3">
    <property type="molecule type" value="protein"/>
</dbReference>
<dbReference type="GO" id="GO:0045334">
    <property type="term" value="C:clathrin-coated endocytic vesicle"/>
    <property type="evidence" value="ECO:0000304"/>
    <property type="project" value="Reactome"/>
</dbReference>
<dbReference type="GO" id="GO:0005737">
    <property type="term" value="C:cytoplasm"/>
    <property type="evidence" value="ECO:0000314"/>
    <property type="project" value="UniProtKB"/>
</dbReference>
<dbReference type="GO" id="GO:0005789">
    <property type="term" value="C:endoplasmic reticulum membrane"/>
    <property type="evidence" value="ECO:0000304"/>
    <property type="project" value="Reactome"/>
</dbReference>
<dbReference type="GO" id="GO:0005576">
    <property type="term" value="C:extracellular region"/>
    <property type="evidence" value="ECO:0000304"/>
    <property type="project" value="Reactome"/>
</dbReference>
<dbReference type="GO" id="GO:0005615">
    <property type="term" value="C:extracellular space"/>
    <property type="evidence" value="ECO:0000314"/>
    <property type="project" value="UniProtKB"/>
</dbReference>
<dbReference type="GO" id="GO:0042599">
    <property type="term" value="C:lamellar body"/>
    <property type="evidence" value="ECO:0000304"/>
    <property type="project" value="Reactome"/>
</dbReference>
<dbReference type="GO" id="GO:0042060">
    <property type="term" value="P:wound healing"/>
    <property type="evidence" value="ECO:0000315"/>
    <property type="project" value="UniProtKB"/>
</dbReference>
<feature type="chain" id="PRO_0000339370" description="Surfactant-associated protein 3">
    <location>
        <begin position="1"/>
        <end position="94"/>
    </location>
</feature>
<evidence type="ECO:0000269" key="1">
    <source>
    </source>
</evidence>
<evidence type="ECO:0000269" key="2">
    <source>
    </source>
</evidence>
<reference key="1">
    <citation type="journal article" date="2003" name="Nature">
        <title>The DNA sequence and analysis of human chromosome 14.</title>
        <authorList>
            <person name="Heilig R."/>
            <person name="Eckenberg R."/>
            <person name="Petit J.-L."/>
            <person name="Fonknechten N."/>
            <person name="Da Silva C."/>
            <person name="Cattolico L."/>
            <person name="Levy M."/>
            <person name="Barbe V."/>
            <person name="De Berardinis V."/>
            <person name="Ureta-Vidal A."/>
            <person name="Pelletier E."/>
            <person name="Vico V."/>
            <person name="Anthouard V."/>
            <person name="Rowen L."/>
            <person name="Madan A."/>
            <person name="Qin S."/>
            <person name="Sun H."/>
            <person name="Du H."/>
            <person name="Pepin K."/>
            <person name="Artiguenave F."/>
            <person name="Robert C."/>
            <person name="Cruaud C."/>
            <person name="Bruels T."/>
            <person name="Jaillon O."/>
            <person name="Friedlander L."/>
            <person name="Samson G."/>
            <person name="Brottier P."/>
            <person name="Cure S."/>
            <person name="Segurens B."/>
            <person name="Aniere F."/>
            <person name="Samain S."/>
            <person name="Crespeau H."/>
            <person name="Abbasi N."/>
            <person name="Aiach N."/>
            <person name="Boscus D."/>
            <person name="Dickhoff R."/>
            <person name="Dors M."/>
            <person name="Dubois I."/>
            <person name="Friedman C."/>
            <person name="Gouyvenoux M."/>
            <person name="James R."/>
            <person name="Madan A."/>
            <person name="Mairey-Estrada B."/>
            <person name="Mangenot S."/>
            <person name="Martins N."/>
            <person name="Menard M."/>
            <person name="Oztas S."/>
            <person name="Ratcliffe A."/>
            <person name="Shaffer T."/>
            <person name="Trask B."/>
            <person name="Vacherie B."/>
            <person name="Bellemere C."/>
            <person name="Belser C."/>
            <person name="Besnard-Gonnet M."/>
            <person name="Bartol-Mavel D."/>
            <person name="Boutard M."/>
            <person name="Briez-Silla S."/>
            <person name="Combette S."/>
            <person name="Dufosse-Laurent V."/>
            <person name="Ferron C."/>
            <person name="Lechaplais C."/>
            <person name="Louesse C."/>
            <person name="Muselet D."/>
            <person name="Magdelenat G."/>
            <person name="Pateau E."/>
            <person name="Petit E."/>
            <person name="Sirvain-Trukniewicz P."/>
            <person name="Trybou A."/>
            <person name="Vega-Czarny N."/>
            <person name="Bataille E."/>
            <person name="Bluet E."/>
            <person name="Bordelais I."/>
            <person name="Dubois M."/>
            <person name="Dumont C."/>
            <person name="Guerin T."/>
            <person name="Haffray S."/>
            <person name="Hammadi R."/>
            <person name="Muanga J."/>
            <person name="Pellouin V."/>
            <person name="Robert D."/>
            <person name="Wunderle E."/>
            <person name="Gauguet G."/>
            <person name="Roy A."/>
            <person name="Sainte-Marthe L."/>
            <person name="Verdier J."/>
            <person name="Verdier-Discala C."/>
            <person name="Hillier L.W."/>
            <person name="Fulton L."/>
            <person name="McPherson J."/>
            <person name="Matsuda F."/>
            <person name="Wilson R."/>
            <person name="Scarpelli C."/>
            <person name="Gyapay G."/>
            <person name="Wincker P."/>
            <person name="Saurin W."/>
            <person name="Quetier F."/>
            <person name="Waterston R."/>
            <person name="Hood L."/>
            <person name="Weissenbach J."/>
        </authorList>
    </citation>
    <scope>NUCLEOTIDE SEQUENCE [LARGE SCALE GENOMIC DNA]</scope>
</reference>
<reference key="2">
    <citation type="journal article" date="2004" name="Genome Res.">
        <title>The status, quality, and expansion of the NIH full-length cDNA project: the Mammalian Gene Collection (MGC).</title>
        <authorList>
            <consortium name="The MGC Project Team"/>
        </authorList>
    </citation>
    <scope>NUCLEOTIDE SEQUENCE [LARGE SCALE MRNA]</scope>
    <source>
        <tissue>Lung</tissue>
    </source>
</reference>
<reference key="3">
    <citation type="journal article" date="2014" name="Eur. Respir. J.">
        <title>SFTA3, a novel protein of the lung: three-dimensional structure, characterisation and immune activation.</title>
        <authorList>
            <person name="Schicht M."/>
            <person name="Rausch F."/>
            <person name="Finotto S."/>
            <person name="Mathews M."/>
            <person name="Mattil A."/>
            <person name="Schubert M."/>
            <person name="Koch B."/>
            <person name="Traxdorf M."/>
            <person name="Bohr C."/>
            <person name="Worlitzsch D."/>
            <person name="Brandt W."/>
            <person name="Garreis F."/>
            <person name="Sel S."/>
            <person name="Paulsen F."/>
            <person name="Brauer L."/>
        </authorList>
    </citation>
    <scope>TISSUE SPECIFICITY</scope>
    <scope>INDUCTION</scope>
    <scope>SUBCELLULAR LOCATION</scope>
</reference>
<reference key="4">
    <citation type="journal article" date="2018" name="Sci. Rep.">
        <title>SFTA3 - a novel surfactant protein of the ocular surface and its role in corneal wound healing and tear film surface tension.</title>
        <authorList>
            <person name="Schicht M."/>
            <person name="Garreis F."/>
            <person name="Hartjen N."/>
            <person name="Beileke S."/>
            <person name="Jacobi C."/>
            <person name="Sahin A."/>
            <person name="Holland D."/>
            <person name="Schroeder H."/>
            <person name="Hammer C.M."/>
            <person name="Paulsen F."/>
            <person name="Braeuer L."/>
        </authorList>
    </citation>
    <scope>TISSUE SPECIFICITY</scope>
    <scope>SUBCELLULAR LOCATION</scope>
    <scope>PUTATIVE FUNCTION</scope>
</reference>
<gene>
    <name type="primary">SFTA3</name>
    <name type="synonym">SFTPH</name>
</gene>
<sequence>MRAGFSDFQLIRDQVLFLQDQAQRLTEWLQLSGFENPVSESTTLCLREREKRIPTCVAVCVPSPGTVHTALLHPTTLSQSRSSSEAKMLIIHTA</sequence>
<comment type="function">
    <text evidence="2">Putative surfactant protein. May be involved in wound healing and in the reduction of the surface tension at the ocular surface.</text>
</comment>
<comment type="subcellular location">
    <subcellularLocation>
        <location evidence="1 2">Cytoplasm</location>
    </subcellularLocation>
    <subcellularLocation>
        <location evidence="1 2">Secreted</location>
    </subcellularLocation>
</comment>
<comment type="tissue specificity">
    <text evidence="1 2">Found in lung alveolar cells type I and II, as well as alveolar macrophages (at protein level). Detected also in testis and kidney. Expressed by different tissues of the ocular system like cornea, conjuctiva, lacrimal gland, eyelid and efferent tear ducts (at protein level). From these tissues is secreted into the tear film (at protein level) (PubMed:29955092).</text>
</comment>
<comment type="induction">
    <text evidence="1 2">By lipopolysaccharides (LPS). Down-regulated by cytokines IL1B; TNF and IL23 (PubMed:24743970, PubMed:29955092). Up-regulated in tears from patients suffering from different forms of dry eye disease (DED) (PubMed:29955092).</text>
</comment>
<protein>
    <recommendedName>
        <fullName>Surfactant-associated protein 3</fullName>
    </recommendedName>
    <alternativeName>
        <fullName>Surfactant-associated protein H</fullName>
        <shortName>SP-H</shortName>
    </alternativeName>
</protein>
<accession>P0C7M3</accession>
<organism>
    <name type="scientific">Homo sapiens</name>
    <name type="common">Human</name>
    <dbReference type="NCBI Taxonomy" id="9606"/>
    <lineage>
        <taxon>Eukaryota</taxon>
        <taxon>Metazoa</taxon>
        <taxon>Chordata</taxon>
        <taxon>Craniata</taxon>
        <taxon>Vertebrata</taxon>
        <taxon>Euteleostomi</taxon>
        <taxon>Mammalia</taxon>
        <taxon>Eutheria</taxon>
        <taxon>Euarchontoglires</taxon>
        <taxon>Primates</taxon>
        <taxon>Haplorrhini</taxon>
        <taxon>Catarrhini</taxon>
        <taxon>Hominidae</taxon>
        <taxon>Homo</taxon>
    </lineage>
</organism>
<proteinExistence type="evidence at protein level"/>